<dbReference type="EC" id="3.6.4.-"/>
<dbReference type="EMBL" id="AC007209">
    <property type="protein sequence ID" value="AAD28668.1"/>
    <property type="status" value="ALT_SEQ"/>
    <property type="molecule type" value="Genomic_DNA"/>
</dbReference>
<dbReference type="EMBL" id="CP002685">
    <property type="protein sequence ID" value="AEC06230.1"/>
    <property type="molecule type" value="Genomic_DNA"/>
</dbReference>
<dbReference type="EMBL" id="CP002685">
    <property type="protein sequence ID" value="ANM62965.1"/>
    <property type="molecule type" value="Genomic_DNA"/>
</dbReference>
<dbReference type="EMBL" id="CP002685">
    <property type="protein sequence ID" value="ANM62966.1"/>
    <property type="molecule type" value="Genomic_DNA"/>
</dbReference>
<dbReference type="PIR" id="C84507">
    <property type="entry name" value="C84507"/>
</dbReference>
<dbReference type="RefSeq" id="NP_001325086.1">
    <property type="nucleotide sequence ID" value="NM_001335390.1"/>
</dbReference>
<dbReference type="RefSeq" id="NP_001325087.1">
    <property type="nucleotide sequence ID" value="NM_001335389.1"/>
</dbReference>
<dbReference type="RefSeq" id="NP_178970.3">
    <property type="nucleotide sequence ID" value="NM_126926.5"/>
</dbReference>
<dbReference type="SMR" id="F4IV99"/>
<dbReference type="BioGRID" id="1184">
    <property type="interactions" value="5"/>
</dbReference>
<dbReference type="FunCoup" id="F4IV99">
    <property type="interactions" value="3109"/>
</dbReference>
<dbReference type="IntAct" id="F4IV99">
    <property type="interactions" value="3"/>
</dbReference>
<dbReference type="STRING" id="3702.F4IV99"/>
<dbReference type="iPTMnet" id="F4IV99"/>
<dbReference type="PaxDb" id="3702-AT2G13370.1"/>
<dbReference type="ProteomicsDB" id="246964"/>
<dbReference type="EnsemblPlants" id="AT2G13370.1">
    <property type="protein sequence ID" value="AT2G13370.1"/>
    <property type="gene ID" value="AT2G13370"/>
</dbReference>
<dbReference type="EnsemblPlants" id="AT2G13370.2">
    <property type="protein sequence ID" value="AT2G13370.2"/>
    <property type="gene ID" value="AT2G13370"/>
</dbReference>
<dbReference type="EnsemblPlants" id="AT2G13370.3">
    <property type="protein sequence ID" value="AT2G13370.3"/>
    <property type="gene ID" value="AT2G13370"/>
</dbReference>
<dbReference type="GeneID" id="815823"/>
<dbReference type="Gramene" id="AT2G13370.1">
    <property type="protein sequence ID" value="AT2G13370.1"/>
    <property type="gene ID" value="AT2G13370"/>
</dbReference>
<dbReference type="Gramene" id="AT2G13370.2">
    <property type="protein sequence ID" value="AT2G13370.2"/>
    <property type="gene ID" value="AT2G13370"/>
</dbReference>
<dbReference type="Gramene" id="AT2G13370.3">
    <property type="protein sequence ID" value="AT2G13370.3"/>
    <property type="gene ID" value="AT2G13370"/>
</dbReference>
<dbReference type="KEGG" id="ath:AT2G13370"/>
<dbReference type="Araport" id="AT2G13370"/>
<dbReference type="TAIR" id="AT2G13370">
    <property type="gene designation" value="CHR5"/>
</dbReference>
<dbReference type="eggNOG" id="KOG0384">
    <property type="taxonomic scope" value="Eukaryota"/>
</dbReference>
<dbReference type="HOGENOM" id="CLU_000315_28_0_1"/>
<dbReference type="InParanoid" id="F4IV99"/>
<dbReference type="OMA" id="WVQIRDD"/>
<dbReference type="PRO" id="PR:F4IV99"/>
<dbReference type="Proteomes" id="UP000006548">
    <property type="component" value="Chromosome 2"/>
</dbReference>
<dbReference type="ExpressionAtlas" id="F4IV99">
    <property type="expression patterns" value="baseline and differential"/>
</dbReference>
<dbReference type="GO" id="GO:0005634">
    <property type="term" value="C:nucleus"/>
    <property type="evidence" value="ECO:0007669"/>
    <property type="project" value="UniProtKB-SubCell"/>
</dbReference>
<dbReference type="GO" id="GO:0009506">
    <property type="term" value="C:plasmodesma"/>
    <property type="evidence" value="ECO:0007005"/>
    <property type="project" value="TAIR"/>
</dbReference>
<dbReference type="GO" id="GO:0005524">
    <property type="term" value="F:ATP binding"/>
    <property type="evidence" value="ECO:0007669"/>
    <property type="project" value="UniProtKB-KW"/>
</dbReference>
<dbReference type="GO" id="GO:0003677">
    <property type="term" value="F:DNA binding"/>
    <property type="evidence" value="ECO:0007669"/>
    <property type="project" value="UniProtKB-KW"/>
</dbReference>
<dbReference type="GO" id="GO:0004386">
    <property type="term" value="F:helicase activity"/>
    <property type="evidence" value="ECO:0007669"/>
    <property type="project" value="UniProtKB-KW"/>
</dbReference>
<dbReference type="GO" id="GO:0016787">
    <property type="term" value="F:hydrolase activity"/>
    <property type="evidence" value="ECO:0007669"/>
    <property type="project" value="UniProtKB-KW"/>
</dbReference>
<dbReference type="GO" id="GO:0006325">
    <property type="term" value="P:chromatin organization"/>
    <property type="evidence" value="ECO:0007669"/>
    <property type="project" value="UniProtKB-KW"/>
</dbReference>
<dbReference type="CDD" id="cd18660">
    <property type="entry name" value="CD1_tandem"/>
    <property type="match status" value="1"/>
</dbReference>
<dbReference type="CDD" id="cd18659">
    <property type="entry name" value="CD2_tandem"/>
    <property type="match status" value="1"/>
</dbReference>
<dbReference type="CDD" id="cd18793">
    <property type="entry name" value="SF2_C_SNF"/>
    <property type="match status" value="1"/>
</dbReference>
<dbReference type="FunFam" id="2.40.50.40:FF:000038">
    <property type="entry name" value="Chromo domain-containing protein 1"/>
    <property type="match status" value="1"/>
</dbReference>
<dbReference type="FunFam" id="3.40.50.300:FF:000130">
    <property type="entry name" value="Chromodomain-helicase-DNA-binding protein 2 isoform 1"/>
    <property type="match status" value="1"/>
</dbReference>
<dbReference type="FunFam" id="3.40.50.10810:FF:000005">
    <property type="entry name" value="Photoperiod-independent early flowering 1"/>
    <property type="match status" value="1"/>
</dbReference>
<dbReference type="FunFam" id="2.40.50.40:FF:000032">
    <property type="entry name" value="protein CHROMATIN REMODELING 5 isoform X2"/>
    <property type="match status" value="1"/>
</dbReference>
<dbReference type="Gene3D" id="2.40.50.40">
    <property type="match status" value="2"/>
</dbReference>
<dbReference type="Gene3D" id="1.10.10.60">
    <property type="entry name" value="Homeodomain-like"/>
    <property type="match status" value="1"/>
</dbReference>
<dbReference type="Gene3D" id="3.40.50.300">
    <property type="entry name" value="P-loop containing nucleotide triphosphate hydrolases"/>
    <property type="match status" value="1"/>
</dbReference>
<dbReference type="Gene3D" id="3.40.50.10810">
    <property type="entry name" value="Tandem AAA-ATPase domain"/>
    <property type="match status" value="1"/>
</dbReference>
<dbReference type="InterPro" id="IPR056302">
    <property type="entry name" value="CHD1-2/Hrp3_HTH"/>
</dbReference>
<dbReference type="InterPro" id="IPR025260">
    <property type="entry name" value="CHD1-like_C"/>
</dbReference>
<dbReference type="InterPro" id="IPR016197">
    <property type="entry name" value="Chromo-like_dom_sf"/>
</dbReference>
<dbReference type="InterPro" id="IPR000953">
    <property type="entry name" value="Chromo/chromo_shadow_dom"/>
</dbReference>
<dbReference type="InterPro" id="IPR023780">
    <property type="entry name" value="Chromo_domain"/>
</dbReference>
<dbReference type="InterPro" id="IPR014001">
    <property type="entry name" value="Helicase_ATP-bd"/>
</dbReference>
<dbReference type="InterPro" id="IPR001650">
    <property type="entry name" value="Helicase_C-like"/>
</dbReference>
<dbReference type="InterPro" id="IPR027417">
    <property type="entry name" value="P-loop_NTPase"/>
</dbReference>
<dbReference type="InterPro" id="IPR038718">
    <property type="entry name" value="SNF2-like_sf"/>
</dbReference>
<dbReference type="InterPro" id="IPR049730">
    <property type="entry name" value="SNF2/RAD54-like_C"/>
</dbReference>
<dbReference type="InterPro" id="IPR000330">
    <property type="entry name" value="SNF2_N"/>
</dbReference>
<dbReference type="PANTHER" id="PTHR45623:SF14">
    <property type="entry name" value="CHROMODOMAIN-HELICASE-DNA-BINDING PROTEIN 1"/>
    <property type="match status" value="1"/>
</dbReference>
<dbReference type="PANTHER" id="PTHR45623">
    <property type="entry name" value="CHROMODOMAIN-HELICASE-DNA-BINDING PROTEIN 3-RELATED-RELATED"/>
    <property type="match status" value="1"/>
</dbReference>
<dbReference type="Pfam" id="PF13907">
    <property type="entry name" value="CHD1-like_C"/>
    <property type="match status" value="1"/>
</dbReference>
<dbReference type="Pfam" id="PF00385">
    <property type="entry name" value="Chromo"/>
    <property type="match status" value="1"/>
</dbReference>
<dbReference type="Pfam" id="PF00271">
    <property type="entry name" value="Helicase_C"/>
    <property type="match status" value="1"/>
</dbReference>
<dbReference type="Pfam" id="PF23588">
    <property type="entry name" value="HTH_CHD1_Hrp3"/>
    <property type="match status" value="1"/>
</dbReference>
<dbReference type="Pfam" id="PF00176">
    <property type="entry name" value="SNF2-rel_dom"/>
    <property type="match status" value="1"/>
</dbReference>
<dbReference type="SMART" id="SM00298">
    <property type="entry name" value="CHROMO"/>
    <property type="match status" value="1"/>
</dbReference>
<dbReference type="SMART" id="SM00487">
    <property type="entry name" value="DEXDc"/>
    <property type="match status" value="1"/>
</dbReference>
<dbReference type="SMART" id="SM01176">
    <property type="entry name" value="DUF4208"/>
    <property type="match status" value="1"/>
</dbReference>
<dbReference type="SMART" id="SM00490">
    <property type="entry name" value="HELICc"/>
    <property type="match status" value="1"/>
</dbReference>
<dbReference type="SUPFAM" id="SSF54160">
    <property type="entry name" value="Chromo domain-like"/>
    <property type="match status" value="2"/>
</dbReference>
<dbReference type="SUPFAM" id="SSF52540">
    <property type="entry name" value="P-loop containing nucleoside triphosphate hydrolases"/>
    <property type="match status" value="2"/>
</dbReference>
<dbReference type="PROSITE" id="PS50013">
    <property type="entry name" value="CHROMO_2"/>
    <property type="match status" value="2"/>
</dbReference>
<dbReference type="PROSITE" id="PS51192">
    <property type="entry name" value="HELICASE_ATP_BIND_1"/>
    <property type="match status" value="1"/>
</dbReference>
<dbReference type="PROSITE" id="PS51194">
    <property type="entry name" value="HELICASE_CTER"/>
    <property type="match status" value="1"/>
</dbReference>
<protein>
    <recommendedName>
        <fullName evidence="8">Protein CHROMATIN REMODELING 5</fullName>
        <shortName>AtCHR5</shortName>
        <ecNumber>3.6.4.-</ecNumber>
    </recommendedName>
</protein>
<comment type="function">
    <text evidence="1 8">DNA-binding helicase that specifically binds to the promoter of target genes, leading to chromatin remodeling, possibly by promoting deposition of histone H3.3 (By similarity). Probable chromatin remodeling factor.</text>
</comment>
<comment type="interaction">
    <interactant intactId="EBI-15203078">
        <id>F4IV99</id>
    </interactant>
    <interactant intactId="EBI-4427947">
        <id>Q9LJG8</id>
        <label>ASIL2</label>
    </interactant>
    <organismsDiffer>false</organismsDiffer>
    <experiments>4</experiments>
</comment>
<comment type="subcellular location">
    <subcellularLocation>
        <location evidence="6">Nucleus</location>
    </subcellularLocation>
</comment>
<comment type="similarity">
    <text evidence="9">Belongs to the SNF2/RAD54 helicase family.</text>
</comment>
<comment type="sequence caution">
    <conflict type="erroneous gene model prediction">
        <sequence resource="EMBL-CDS" id="AAD28668"/>
    </conflict>
</comment>
<name>CHR5_ARATH</name>
<sequence length="1724" mass="197270">MAFFRNYSNDTVSHNVLDENEERQNAATFQSSPLNEDVDGTYSERGFDMNMDVQYQSDPEPGCSIRQPNETAVDNVADPVDSHYQSSTKRLGVTGRWGSTFWKDCQPMGQREGSDPAKDSQSGYKEAYHSEDNHSNDRSEKLDSENENDNENEEEDNEMNKHQSGQADVPADEMLSDEYYEQDEDNQSDHVHYKGYSNPTNSRSLPKAGSAVHSNSRTSRAIHKNIHYSDSNHDHNGDADMDYEEEEDEDDPEDADFEPYDAADDGGASKKHGQGWDVSDEDPESDEEIDLSDYEDDYGTKKPKVRQQSKGFRKSSAGLERKSFHVSSRQKRKTSYQDDDSEEDSENDNDEGFRSLARRGTTLRQNNGRSTNTIGQSSEVRSSTRSVRKVSYVESEDSEDIDDGKNRKNQKDDIEEEDADVIEKVLWHQLKGMGEDVQTNNKSTVPVLVSQLFDTEPDWNEMEFLIKWKGQSHLHCQWKTLSDLQNLSGFKKVLNYTKKVTEEIRYRTALSREEIEVNDVSKEMDLDIIKQNSQVERIIADRISKDGLGDVVPEYLVKWQGLSYAEATWEKDVDIAFAQVAIDEYKAREVSIAVQGKMVEQQRTKGKASLRKLDEQPEWLIGGTLRDYQLEGLNFLVNSWLNDTNVILADEMGLGKTVQSVSMLGFLQNTQQIPGPFLVVVPLSTLANWAKEFRKWLPGMNIIVYVGTRASREVCQQYEFYNEKKVGRPIKFNALLTTYEVVLKDKAVLSKIKWIYLMVDEAHRLKNSEAQLYTALLEFSTKNKLLITGTPLQNSVEELWALLHFLDPGKFKNKDEFVENYKNLSSFNESELANLHLELRPHILRRVIKDVEKSLPPKIERILRVEMSPLQKQYYKWILERNFHDLNKGVRGNQVSLLNIVVELKKCCNHPFLFESADHGYGGDINDNSKLDKIILSSGKLVILDKLLVRLRETKHRVLIFSQMVRMLDILAEYLSLRGFQFQRLDGSTKAELRQQAMDHFNAPASDDFCFLLSTRAGGLGINLATADTVVIFDSDWNPQNDLQAMSRAHRIGQQEVVNIYRFVTSKSVEEEILERAKRKMVLDHLVIQKLNAEGRLEKRETKKGSNFDKNELSAILRFGAEELFKEDKNDEESKKRLLSMDIDEILERAEQVEEKHTDETEHELLGAFKVANFCNAEDDGSFWSRWIKPDSVVTAEEALAPRAARNTKSYVDPSHPDRTSKRKKKGSEPPEHTERSQKRRKTEYFVPSTPLLEGTSAQVRGWSYGNLPKRDAQRFYRTVMKFGNHNQMACIAEEVGGVVEAAPEEAQVELFDALIDGCKESVETGNFEPKGPVLDFFGVPVKANELLKRVQGLQLLSKRISRYNDPISQFRVLSYLKPSNWSKGCGWNQIDDARLLLGILYHGFGNWEKIRLDESLGLTKKIAPVELQHHETFLPRAPNLKERATALLEMELAAAGGKNTNAKASRKNSKKVKDNLINQFKAPARDRRGKSGPANVSLLSTKDGPRKTQKAEPLVKEEGEMSDDGEVYEQFKEQKWMEWCEDVLADEIKTLGRLQRLQTTSADLPKEKVLFKIRRYLEILGRRIDAIVLEHEEDLYKQDRMTMRLWNYVSTFSNLSGDRLNQIYSKLKQEKEEEEGVGPSHLNGSRNFQRQQKFKTAGNSQGSQQVHKGIDTAKFEAWKRRRRTENDVQTERPTITNSNSLGILGPGPLDRSHRARQTGFPPR</sequence>
<organism evidence="11">
    <name type="scientific">Arabidopsis thaliana</name>
    <name type="common">Mouse-ear cress</name>
    <dbReference type="NCBI Taxonomy" id="3702"/>
    <lineage>
        <taxon>Eukaryota</taxon>
        <taxon>Viridiplantae</taxon>
        <taxon>Streptophyta</taxon>
        <taxon>Embryophyta</taxon>
        <taxon>Tracheophyta</taxon>
        <taxon>Spermatophyta</taxon>
        <taxon>Magnoliopsida</taxon>
        <taxon>eudicotyledons</taxon>
        <taxon>Gunneridae</taxon>
        <taxon>Pentapetalae</taxon>
        <taxon>rosids</taxon>
        <taxon>malvids</taxon>
        <taxon>Brassicales</taxon>
        <taxon>Brassicaceae</taxon>
        <taxon>Camelineae</taxon>
        <taxon>Arabidopsis</taxon>
    </lineage>
</organism>
<gene>
    <name evidence="8" type="primary">CHR5</name>
    <name evidence="10" type="ordered locus">At2g13370</name>
</gene>
<keyword id="KW-0067">ATP-binding</keyword>
<keyword id="KW-0156">Chromatin regulator</keyword>
<keyword id="KW-0175">Coiled coil</keyword>
<keyword id="KW-0238">DNA-binding</keyword>
<keyword id="KW-0347">Helicase</keyword>
<keyword id="KW-0378">Hydrolase</keyword>
<keyword id="KW-0547">Nucleotide-binding</keyword>
<keyword id="KW-0539">Nucleus</keyword>
<keyword id="KW-1185">Reference proteome</keyword>
<keyword id="KW-0677">Repeat</keyword>
<feature type="chain" id="PRO_0000430853" description="Protein CHROMATIN REMODELING 5">
    <location>
        <begin position="1"/>
        <end position="1724"/>
    </location>
</feature>
<feature type="domain" description="Chromo 1" evidence="3">
    <location>
        <begin position="420"/>
        <end position="499"/>
    </location>
</feature>
<feature type="domain" description="Chromo 2" evidence="3">
    <location>
        <begin position="533"/>
        <end position="597"/>
    </location>
</feature>
<feature type="domain" description="Helicase ATP-binding" evidence="4">
    <location>
        <begin position="637"/>
        <end position="809"/>
    </location>
</feature>
<feature type="domain" description="Helicase C-terminal" evidence="5">
    <location>
        <begin position="943"/>
        <end position="1094"/>
    </location>
</feature>
<feature type="region of interest" description="Disordered" evidence="7">
    <location>
        <begin position="24"/>
        <end position="88"/>
    </location>
</feature>
<feature type="region of interest" description="Disordered" evidence="7">
    <location>
        <begin position="104"/>
        <end position="415"/>
    </location>
</feature>
<feature type="region of interest" description="Disordered" evidence="7">
    <location>
        <begin position="1199"/>
        <end position="1245"/>
    </location>
</feature>
<feature type="region of interest" description="Disordered" evidence="7">
    <location>
        <begin position="1480"/>
        <end position="1524"/>
    </location>
</feature>
<feature type="region of interest" description="Disordered" evidence="7">
    <location>
        <begin position="1654"/>
        <end position="1724"/>
    </location>
</feature>
<feature type="coiled-coil region" evidence="2">
    <location>
        <begin position="138"/>
        <end position="164"/>
    </location>
</feature>
<feature type="coiled-coil region" evidence="2">
    <location>
        <begin position="505"/>
        <end position="525"/>
    </location>
</feature>
<feature type="coiled-coil region" evidence="2">
    <location>
        <begin position="1126"/>
        <end position="1163"/>
    </location>
</feature>
<feature type="short sequence motif" description="Nuclear localization signal 1" evidence="6">
    <location>
        <begin position="320"/>
        <end position="327"/>
    </location>
</feature>
<feature type="short sequence motif" description="DEAH box" evidence="4">
    <location>
        <begin position="760"/>
        <end position="763"/>
    </location>
</feature>
<feature type="short sequence motif" description="Nuclear localization signal 2" evidence="6">
    <location>
        <begin position="1224"/>
        <end position="1231"/>
    </location>
</feature>
<feature type="short sequence motif" description="Nuclear localization signal 3" evidence="6">
    <location>
        <begin position="1348"/>
        <end position="1355"/>
    </location>
</feature>
<feature type="compositionally biased region" description="Polar residues" evidence="7">
    <location>
        <begin position="25"/>
        <end position="34"/>
    </location>
</feature>
<feature type="compositionally biased region" description="Basic and acidic residues" evidence="7">
    <location>
        <begin position="126"/>
        <end position="144"/>
    </location>
</feature>
<feature type="compositionally biased region" description="Acidic residues" evidence="7">
    <location>
        <begin position="145"/>
        <end position="157"/>
    </location>
</feature>
<feature type="compositionally biased region" description="Acidic residues" evidence="7">
    <location>
        <begin position="170"/>
        <end position="186"/>
    </location>
</feature>
<feature type="compositionally biased region" description="Acidic residues" evidence="7">
    <location>
        <begin position="239"/>
        <end position="264"/>
    </location>
</feature>
<feature type="compositionally biased region" description="Acidic residues" evidence="7">
    <location>
        <begin position="278"/>
        <end position="297"/>
    </location>
</feature>
<feature type="compositionally biased region" description="Basic residues" evidence="7">
    <location>
        <begin position="301"/>
        <end position="313"/>
    </location>
</feature>
<feature type="compositionally biased region" description="Acidic residues" evidence="7">
    <location>
        <begin position="337"/>
        <end position="350"/>
    </location>
</feature>
<feature type="compositionally biased region" description="Polar residues" evidence="7">
    <location>
        <begin position="362"/>
        <end position="376"/>
    </location>
</feature>
<feature type="compositionally biased region" description="Basic and acidic residues" evidence="7">
    <location>
        <begin position="403"/>
        <end position="412"/>
    </location>
</feature>
<feature type="compositionally biased region" description="Basic and acidic residues" evidence="7">
    <location>
        <begin position="1227"/>
        <end position="1237"/>
    </location>
</feature>
<feature type="compositionally biased region" description="Basic and acidic residues" evidence="7">
    <location>
        <begin position="1504"/>
        <end position="1520"/>
    </location>
</feature>
<feature type="compositionally biased region" description="Polar residues" evidence="7">
    <location>
        <begin position="1658"/>
        <end position="1667"/>
    </location>
</feature>
<feature type="compositionally biased region" description="Basic and acidic residues" evidence="7">
    <location>
        <begin position="1669"/>
        <end position="1691"/>
    </location>
</feature>
<feature type="compositionally biased region" description="Polar residues" evidence="7">
    <location>
        <begin position="1692"/>
        <end position="1702"/>
    </location>
</feature>
<feature type="binding site" evidence="4">
    <location>
        <begin position="650"/>
        <end position="657"/>
    </location>
    <ligand>
        <name>ATP</name>
        <dbReference type="ChEBI" id="CHEBI:30616"/>
    </ligand>
</feature>
<accession>F4IV99</accession>
<accession>Q9SI41</accession>
<proteinExistence type="evidence at protein level"/>
<evidence type="ECO:0000250" key="1">
    <source>
        <dbReference type="UniProtKB" id="E9PZM4"/>
    </source>
</evidence>
<evidence type="ECO:0000255" key="2"/>
<evidence type="ECO:0000255" key="3">
    <source>
        <dbReference type="PROSITE-ProRule" id="PRU00053"/>
    </source>
</evidence>
<evidence type="ECO:0000255" key="4">
    <source>
        <dbReference type="PROSITE-ProRule" id="PRU00541"/>
    </source>
</evidence>
<evidence type="ECO:0000255" key="5">
    <source>
        <dbReference type="PROSITE-ProRule" id="PRU00542"/>
    </source>
</evidence>
<evidence type="ECO:0000255" key="6">
    <source>
        <dbReference type="PROSITE-ProRule" id="PRU00768"/>
    </source>
</evidence>
<evidence type="ECO:0000256" key="7">
    <source>
        <dbReference type="SAM" id="MobiDB-lite"/>
    </source>
</evidence>
<evidence type="ECO:0000303" key="8">
    <source>
    </source>
</evidence>
<evidence type="ECO:0000305" key="9"/>
<evidence type="ECO:0000312" key="10">
    <source>
        <dbReference type="Araport" id="AT2G13370"/>
    </source>
</evidence>
<evidence type="ECO:0000312" key="11">
    <source>
        <dbReference type="Proteomes" id="UP000006548"/>
    </source>
</evidence>
<reference key="1">
    <citation type="journal article" date="1999" name="Nature">
        <title>Sequence and analysis of chromosome 2 of the plant Arabidopsis thaliana.</title>
        <authorList>
            <person name="Lin X."/>
            <person name="Kaul S."/>
            <person name="Rounsley S.D."/>
            <person name="Shea T.P."/>
            <person name="Benito M.-I."/>
            <person name="Town C.D."/>
            <person name="Fujii C.Y."/>
            <person name="Mason T.M."/>
            <person name="Bowman C.L."/>
            <person name="Barnstead M.E."/>
            <person name="Feldblyum T.V."/>
            <person name="Buell C.R."/>
            <person name="Ketchum K.A."/>
            <person name="Lee J.J."/>
            <person name="Ronning C.M."/>
            <person name="Koo H.L."/>
            <person name="Moffat K.S."/>
            <person name="Cronin L.A."/>
            <person name="Shen M."/>
            <person name="Pai G."/>
            <person name="Van Aken S."/>
            <person name="Umayam L."/>
            <person name="Tallon L.J."/>
            <person name="Gill J.E."/>
            <person name="Adams M.D."/>
            <person name="Carrera A.J."/>
            <person name="Creasy T.H."/>
            <person name="Goodman H.M."/>
            <person name="Somerville C.R."/>
            <person name="Copenhaver G.P."/>
            <person name="Preuss D."/>
            <person name="Nierman W.C."/>
            <person name="White O."/>
            <person name="Eisen J.A."/>
            <person name="Salzberg S.L."/>
            <person name="Fraser C.M."/>
            <person name="Venter J.C."/>
        </authorList>
    </citation>
    <scope>NUCLEOTIDE SEQUENCE [LARGE SCALE GENOMIC DNA]</scope>
    <source>
        <strain>cv. Columbia</strain>
    </source>
</reference>
<reference key="2">
    <citation type="journal article" date="2017" name="Plant J.">
        <title>Araport11: a complete reannotation of the Arabidopsis thaliana reference genome.</title>
        <authorList>
            <person name="Cheng C.Y."/>
            <person name="Krishnakumar V."/>
            <person name="Chan A.P."/>
            <person name="Thibaud-Nissen F."/>
            <person name="Schobel S."/>
            <person name="Town C.D."/>
        </authorList>
    </citation>
    <scope>GENOME REANNOTATION</scope>
    <source>
        <strain>cv. Columbia</strain>
    </source>
</reference>
<reference key="3">
    <citation type="journal article" date="2006" name="Genetics">
        <title>Involvement of the Arabidopsis SWI2/SNF2 chromatin remodeling gene family in DNA damage response and recombination.</title>
        <authorList>
            <person name="Shaked H."/>
            <person name="Avivi-Ragolsky N."/>
            <person name="Levy A.A."/>
        </authorList>
    </citation>
    <scope>GENE FAMILY</scope>
    <scope>NOMENCLATURE</scope>
</reference>
<reference key="4">
    <citation type="journal article" date="2013" name="PLoS ONE">
        <title>Genome-wide comparative in silico analysis of the RNA helicase gene family in Zea mays and Glycine max: a comparison with Arabidopsis and Oryza sativa.</title>
        <authorList>
            <person name="Xu R."/>
            <person name="Zhang S."/>
            <person name="Huang J."/>
            <person name="Zheng C."/>
        </authorList>
    </citation>
    <scope>GENE FAMILY</scope>
</reference>